<proteinExistence type="inferred from homology"/>
<feature type="chain" id="PRO_0000365085" description="Mitotic-spindle organizing protein 1">
    <location>
        <begin position="1"/>
        <end position="80"/>
    </location>
</feature>
<keyword id="KW-0963">Cytoplasm</keyword>
<keyword id="KW-0206">Cytoskeleton</keyword>
<keyword id="KW-1185">Reference proteome</keyword>
<protein>
    <recommendedName>
        <fullName>Mitotic-spindle organizing protein 1</fullName>
    </recommendedName>
    <alternativeName>
        <fullName>Mitotic-spindle organizing protein associated with a ring of gamma-tubulin 1</fullName>
    </alternativeName>
</protein>
<gene>
    <name type="ORF">MGG_14000</name>
</gene>
<reference key="1">
    <citation type="journal article" date="2005" name="Nature">
        <title>The genome sequence of the rice blast fungus Magnaporthe grisea.</title>
        <authorList>
            <person name="Dean R.A."/>
            <person name="Talbot N.J."/>
            <person name="Ebbole D.J."/>
            <person name="Farman M.L."/>
            <person name="Mitchell T.K."/>
            <person name="Orbach M.J."/>
            <person name="Thon M.R."/>
            <person name="Kulkarni R."/>
            <person name="Xu J.-R."/>
            <person name="Pan H."/>
            <person name="Read N.D."/>
            <person name="Lee Y.-H."/>
            <person name="Carbone I."/>
            <person name="Brown D."/>
            <person name="Oh Y.Y."/>
            <person name="Donofrio N."/>
            <person name="Jeong J.S."/>
            <person name="Soanes D.M."/>
            <person name="Djonovic S."/>
            <person name="Kolomiets E."/>
            <person name="Rehmeyer C."/>
            <person name="Li W."/>
            <person name="Harding M."/>
            <person name="Kim S."/>
            <person name="Lebrun M.-H."/>
            <person name="Bohnert H."/>
            <person name="Coughlan S."/>
            <person name="Butler J."/>
            <person name="Calvo S.E."/>
            <person name="Ma L.-J."/>
            <person name="Nicol R."/>
            <person name="Purcell S."/>
            <person name="Nusbaum C."/>
            <person name="Galagan J.E."/>
            <person name="Birren B.W."/>
        </authorList>
    </citation>
    <scope>NUCLEOTIDE SEQUENCE [LARGE SCALE GENOMIC DNA]</scope>
    <source>
        <strain>70-15 / ATCC MYA-4617 / FGSC 8958</strain>
    </source>
</reference>
<evidence type="ECO:0000250" key="1"/>
<evidence type="ECO:0000305" key="2"/>
<sequence length="80" mass="8674">MDSKREKQAAAQNAVDILHEISTILNCHLDRRTLSICISMIENGVSPEALASVVKELRKQGQEATAQIAQAGSAASSRRR</sequence>
<dbReference type="EMBL" id="CM001234">
    <property type="protein sequence ID" value="EHA49763.1"/>
    <property type="molecule type" value="Genomic_DNA"/>
</dbReference>
<dbReference type="RefSeq" id="XP_003716082.1">
    <property type="nucleotide sequence ID" value="XM_003716034.1"/>
</dbReference>
<dbReference type="SMR" id="A4QYG1"/>
<dbReference type="STRING" id="242507.A4QYG1"/>
<dbReference type="EnsemblFungi" id="MGG_14000T0">
    <property type="protein sequence ID" value="MGG_14000T0"/>
    <property type="gene ID" value="MGG_14000"/>
</dbReference>
<dbReference type="GeneID" id="5049318"/>
<dbReference type="KEGG" id="mgr:MGG_14000"/>
<dbReference type="VEuPathDB" id="FungiDB:MGG_14000"/>
<dbReference type="eggNOG" id="ENOG502S6UI">
    <property type="taxonomic scope" value="Eukaryota"/>
</dbReference>
<dbReference type="HOGENOM" id="CLU_160285_2_0_1"/>
<dbReference type="InParanoid" id="A4QYG1"/>
<dbReference type="OMA" id="LSICVGM"/>
<dbReference type="OrthoDB" id="48571at2759"/>
<dbReference type="Proteomes" id="UP000009058">
    <property type="component" value="Chromosome 4"/>
</dbReference>
<dbReference type="GO" id="GO:0005737">
    <property type="term" value="C:cytoplasm"/>
    <property type="evidence" value="ECO:0007669"/>
    <property type="project" value="UniProtKB-KW"/>
</dbReference>
<dbReference type="GO" id="GO:0000931">
    <property type="term" value="C:gamma-tubulin ring complex"/>
    <property type="evidence" value="ECO:0007669"/>
    <property type="project" value="InterPro"/>
</dbReference>
<dbReference type="GO" id="GO:0031021">
    <property type="term" value="C:interphase microtubule organizing center"/>
    <property type="evidence" value="ECO:0007669"/>
    <property type="project" value="TreeGrafter"/>
</dbReference>
<dbReference type="GO" id="GO:0044732">
    <property type="term" value="C:mitotic spindle pole body"/>
    <property type="evidence" value="ECO:0007669"/>
    <property type="project" value="TreeGrafter"/>
</dbReference>
<dbReference type="GO" id="GO:0005819">
    <property type="term" value="C:spindle"/>
    <property type="evidence" value="ECO:0007669"/>
    <property type="project" value="TreeGrafter"/>
</dbReference>
<dbReference type="GO" id="GO:0033566">
    <property type="term" value="P:gamma-tubulin complex localization"/>
    <property type="evidence" value="ECO:0007669"/>
    <property type="project" value="InterPro"/>
</dbReference>
<dbReference type="GO" id="GO:0051415">
    <property type="term" value="P:microtubule nucleation by interphase microtubule organizing center"/>
    <property type="evidence" value="ECO:0007669"/>
    <property type="project" value="TreeGrafter"/>
</dbReference>
<dbReference type="GO" id="GO:0090307">
    <property type="term" value="P:mitotic spindle assembly"/>
    <property type="evidence" value="ECO:0007669"/>
    <property type="project" value="TreeGrafter"/>
</dbReference>
<dbReference type="InterPro" id="IPR022214">
    <property type="entry name" value="MZT1"/>
</dbReference>
<dbReference type="PANTHER" id="PTHR28520">
    <property type="entry name" value="MITOTIC-SPINDLE ORGANIZING PROTEIN 1"/>
    <property type="match status" value="1"/>
</dbReference>
<dbReference type="PANTHER" id="PTHR28520:SF2">
    <property type="entry name" value="MITOTIC-SPINDLE ORGANIZING PROTEIN 1"/>
    <property type="match status" value="1"/>
</dbReference>
<dbReference type="Pfam" id="PF12554">
    <property type="entry name" value="MOZART1"/>
    <property type="match status" value="1"/>
</dbReference>
<comment type="function">
    <text evidence="1">Required for gamma-tubulin complex recruitment to the microtubule organizing center (MTOC).</text>
</comment>
<comment type="subunit">
    <text evidence="1">Part of the gamma-tubulin complex.</text>
</comment>
<comment type="subcellular location">
    <subcellularLocation>
        <location evidence="1">Cytoplasm</location>
        <location evidence="1">Cytoskeleton</location>
        <location evidence="1">Microtubule organizing center</location>
        <location evidence="1">Spindle pole body</location>
    </subcellularLocation>
</comment>
<comment type="similarity">
    <text evidence="2">Belongs to the MOZART1 family.</text>
</comment>
<organism>
    <name type="scientific">Pyricularia oryzae (strain 70-15 / ATCC MYA-4617 / FGSC 8958)</name>
    <name type="common">Rice blast fungus</name>
    <name type="synonym">Magnaporthe oryzae</name>
    <dbReference type="NCBI Taxonomy" id="242507"/>
    <lineage>
        <taxon>Eukaryota</taxon>
        <taxon>Fungi</taxon>
        <taxon>Dikarya</taxon>
        <taxon>Ascomycota</taxon>
        <taxon>Pezizomycotina</taxon>
        <taxon>Sordariomycetes</taxon>
        <taxon>Sordariomycetidae</taxon>
        <taxon>Magnaporthales</taxon>
        <taxon>Pyriculariaceae</taxon>
        <taxon>Pyricularia</taxon>
    </lineage>
</organism>
<accession>A4QYG1</accession>
<accession>G4N639</accession>
<name>MZT1_PYRO7</name>